<organism>
    <name type="scientific">Oryza sativa subsp. indica</name>
    <name type="common">Rice</name>
    <dbReference type="NCBI Taxonomy" id="39946"/>
    <lineage>
        <taxon>Eukaryota</taxon>
        <taxon>Viridiplantae</taxon>
        <taxon>Streptophyta</taxon>
        <taxon>Embryophyta</taxon>
        <taxon>Tracheophyta</taxon>
        <taxon>Spermatophyta</taxon>
        <taxon>Magnoliopsida</taxon>
        <taxon>Liliopsida</taxon>
        <taxon>Poales</taxon>
        <taxon>Poaceae</taxon>
        <taxon>BOP clade</taxon>
        <taxon>Oryzoideae</taxon>
        <taxon>Oryzeae</taxon>
        <taxon>Oryzinae</taxon>
        <taxon>Oryza</taxon>
        <taxon>Oryza sativa</taxon>
    </lineage>
</organism>
<keyword id="KW-0067">ATP-binding</keyword>
<keyword id="KW-0186">Copper</keyword>
<keyword id="KW-0256">Endoplasmic reticulum</keyword>
<keyword id="KW-0936">Ethylene signaling pathway</keyword>
<keyword id="KW-0418">Kinase</keyword>
<keyword id="KW-0472">Membrane</keyword>
<keyword id="KW-0479">Metal-binding</keyword>
<keyword id="KW-0547">Nucleotide-binding</keyword>
<keyword id="KW-0597">Phosphoprotein</keyword>
<keyword id="KW-0675">Receptor</keyword>
<keyword id="KW-1185">Reference proteome</keyword>
<keyword id="KW-0808">Transferase</keyword>
<keyword id="KW-0812">Transmembrane</keyword>
<keyword id="KW-1133">Transmembrane helix</keyword>
<keyword id="KW-0902">Two-component regulatory system</keyword>
<gene>
    <name evidence="7" type="primary">ETR4</name>
    <name evidence="8" type="ORF">OsI_25565</name>
</gene>
<protein>
    <recommendedName>
        <fullName evidence="6">Ethylene receptor 4</fullName>
        <shortName evidence="5">OS-ETR4</shortName>
        <ecNumber evidence="6">2.7.13.3</ecNumber>
    </recommendedName>
</protein>
<name>ETR4_ORYSI</name>
<feature type="chain" id="PRO_0000433870" description="Ethylene receptor 4">
    <location>
        <begin position="1"/>
        <end position="777"/>
    </location>
</feature>
<feature type="transmembrane region" description="Helical" evidence="2">
    <location>
        <begin position="49"/>
        <end position="69"/>
    </location>
</feature>
<feature type="transmembrane region" description="Helical" evidence="2">
    <location>
        <begin position="77"/>
        <end position="97"/>
    </location>
</feature>
<feature type="transmembrane region" description="Helical" evidence="2">
    <location>
        <begin position="113"/>
        <end position="133"/>
    </location>
</feature>
<feature type="domain" description="GAF" evidence="6">
    <location>
        <begin position="184"/>
        <end position="344"/>
    </location>
</feature>
<feature type="domain" description="Histidine kinase" evidence="3">
    <location>
        <begin position="387"/>
        <end position="521"/>
    </location>
</feature>
<feature type="domain" description="Response regulatory" evidence="4">
    <location>
        <begin position="645"/>
        <end position="774"/>
    </location>
</feature>
<feature type="binding site" evidence="1">
    <location>
        <position position="88"/>
    </location>
    <ligand>
        <name>Cu cation</name>
        <dbReference type="ChEBI" id="CHEBI:23378"/>
    </ligand>
</feature>
<feature type="binding site" evidence="1">
    <location>
        <position position="92"/>
    </location>
    <ligand>
        <name>Cu cation</name>
        <dbReference type="ChEBI" id="CHEBI:23378"/>
    </ligand>
</feature>
<feature type="modified residue" description="Phosphohistidine; by autocatalysis" evidence="3">
    <location>
        <position position="390"/>
    </location>
</feature>
<feature type="modified residue" description="4-aspartylphosphate" evidence="4">
    <location>
        <position position="696"/>
    </location>
</feature>
<accession>Q6T5K3</accession>
<dbReference type="EC" id="2.7.13.3" evidence="6"/>
<dbReference type="EMBL" id="AY434734">
    <property type="protein sequence ID" value="AAR08914.1"/>
    <property type="molecule type" value="mRNA"/>
</dbReference>
<dbReference type="EMBL" id="CM000132">
    <property type="protein sequence ID" value="EAZ03426.1"/>
    <property type="molecule type" value="Genomic_DNA"/>
</dbReference>
<dbReference type="STRING" id="39946.Q6T5K3"/>
<dbReference type="EnsemblPlants" id="BGIOSGA024506-TA">
    <property type="protein sequence ID" value="BGIOSGA024506-PA"/>
    <property type="gene ID" value="BGIOSGA024506"/>
</dbReference>
<dbReference type="EnsemblPlants" id="OsGoSa_07g0009390.01">
    <property type="protein sequence ID" value="OsGoSa_07g0009390.01"/>
    <property type="gene ID" value="OsGoSa_07g0009390"/>
</dbReference>
<dbReference type="EnsemblPlants" id="OsIR64_07g0009910.01">
    <property type="protein sequence ID" value="OsIR64_07g0009910.01"/>
    <property type="gene ID" value="OsIR64_07g0009910"/>
</dbReference>
<dbReference type="EnsemblPlants" id="OsKYG_07g0009430.01">
    <property type="protein sequence ID" value="OsKYG_07g0009430.01"/>
    <property type="gene ID" value="OsKYG_07g0009430"/>
</dbReference>
<dbReference type="EnsemblPlants" id="OsLima_07g0009390.01">
    <property type="protein sequence ID" value="OsLima_07g0009390.01"/>
    <property type="gene ID" value="OsLima_07g0009390"/>
</dbReference>
<dbReference type="EnsemblPlants" id="OsMH63_07G009370_01">
    <property type="protein sequence ID" value="OsMH63_07G009370_01"/>
    <property type="gene ID" value="OsMH63_07G009370"/>
</dbReference>
<dbReference type="EnsemblPlants" id="OsPr106_07g0009450.01">
    <property type="protein sequence ID" value="OsPr106_07g0009450.01"/>
    <property type="gene ID" value="OsPr106_07g0009450"/>
</dbReference>
<dbReference type="Gramene" id="BGIOSGA024506-TA">
    <property type="protein sequence ID" value="BGIOSGA024506-PA"/>
    <property type="gene ID" value="BGIOSGA024506"/>
</dbReference>
<dbReference type="Gramene" id="OsGoSa_07g0009390.01">
    <property type="protein sequence ID" value="OsGoSa_07g0009390.01"/>
    <property type="gene ID" value="OsGoSa_07g0009390"/>
</dbReference>
<dbReference type="Gramene" id="OsIR64_07g0009910.01">
    <property type="protein sequence ID" value="OsIR64_07g0009910.01"/>
    <property type="gene ID" value="OsIR64_07g0009910"/>
</dbReference>
<dbReference type="Gramene" id="OsKYG_07g0009430.01">
    <property type="protein sequence ID" value="OsKYG_07g0009430.01"/>
    <property type="gene ID" value="OsKYG_07g0009430"/>
</dbReference>
<dbReference type="Gramene" id="OsLima_07g0009390.01">
    <property type="protein sequence ID" value="OsLima_07g0009390.01"/>
    <property type="gene ID" value="OsLima_07g0009390"/>
</dbReference>
<dbReference type="Gramene" id="OsMH63_07G009370_01">
    <property type="protein sequence ID" value="OsMH63_07G009370_01"/>
    <property type="gene ID" value="OsMH63_07G009370"/>
</dbReference>
<dbReference type="Gramene" id="OsPr106_07g0009450.01">
    <property type="protein sequence ID" value="OsPr106_07g0009450.01"/>
    <property type="gene ID" value="OsPr106_07g0009450"/>
</dbReference>
<dbReference type="HOGENOM" id="CLU_000445_114_48_1"/>
<dbReference type="OMA" id="ACAVWMP"/>
<dbReference type="OrthoDB" id="647750at2759"/>
<dbReference type="Proteomes" id="UP000007015">
    <property type="component" value="Chromosome 7"/>
</dbReference>
<dbReference type="GO" id="GO:0005789">
    <property type="term" value="C:endoplasmic reticulum membrane"/>
    <property type="evidence" value="ECO:0007669"/>
    <property type="project" value="UniProtKB-SubCell"/>
</dbReference>
<dbReference type="GO" id="GO:0005524">
    <property type="term" value="F:ATP binding"/>
    <property type="evidence" value="ECO:0007669"/>
    <property type="project" value="UniProtKB-KW"/>
</dbReference>
<dbReference type="GO" id="GO:0051740">
    <property type="term" value="F:ethylene binding"/>
    <property type="evidence" value="ECO:0007669"/>
    <property type="project" value="InterPro"/>
</dbReference>
<dbReference type="GO" id="GO:0038199">
    <property type="term" value="F:ethylene receptor activity"/>
    <property type="evidence" value="ECO:0007669"/>
    <property type="project" value="InterPro"/>
</dbReference>
<dbReference type="GO" id="GO:0046872">
    <property type="term" value="F:metal ion binding"/>
    <property type="evidence" value="ECO:0007669"/>
    <property type="project" value="UniProtKB-KW"/>
</dbReference>
<dbReference type="GO" id="GO:0000155">
    <property type="term" value="F:phosphorelay sensor kinase activity"/>
    <property type="evidence" value="ECO:0007669"/>
    <property type="project" value="InterPro"/>
</dbReference>
<dbReference type="CDD" id="cd16938">
    <property type="entry name" value="HATPase_ETR2_ERS2-EIN4-like"/>
    <property type="match status" value="1"/>
</dbReference>
<dbReference type="FunFam" id="3.40.50.2300:FF:000366">
    <property type="entry name" value="Ethylene receptor"/>
    <property type="match status" value="1"/>
</dbReference>
<dbReference type="FunFam" id="1.10.287.130:FF:000087">
    <property type="entry name" value="Ethylene receptor 4"/>
    <property type="match status" value="1"/>
</dbReference>
<dbReference type="Gene3D" id="1.10.287.130">
    <property type="match status" value="1"/>
</dbReference>
<dbReference type="Gene3D" id="3.30.450.40">
    <property type="match status" value="1"/>
</dbReference>
<dbReference type="Gene3D" id="3.40.50.2300">
    <property type="match status" value="1"/>
</dbReference>
<dbReference type="InterPro" id="IPR011006">
    <property type="entry name" value="CheY-like_superfamily"/>
</dbReference>
<dbReference type="InterPro" id="IPR014525">
    <property type="entry name" value="ETR"/>
</dbReference>
<dbReference type="InterPro" id="IPR003018">
    <property type="entry name" value="GAF"/>
</dbReference>
<dbReference type="InterPro" id="IPR029016">
    <property type="entry name" value="GAF-like_dom_sf"/>
</dbReference>
<dbReference type="InterPro" id="IPR036097">
    <property type="entry name" value="HisK_dim/P_sf"/>
</dbReference>
<dbReference type="InterPro" id="IPR001789">
    <property type="entry name" value="Sig_transdc_resp-reg_receiver"/>
</dbReference>
<dbReference type="PANTHER" id="PTHR24423:SF618">
    <property type="entry name" value="ETHYLENE RECEPTOR 4"/>
    <property type="match status" value="1"/>
</dbReference>
<dbReference type="PANTHER" id="PTHR24423">
    <property type="entry name" value="TWO-COMPONENT SENSOR HISTIDINE KINASE"/>
    <property type="match status" value="1"/>
</dbReference>
<dbReference type="Pfam" id="PF25487">
    <property type="entry name" value="ETR1_N"/>
    <property type="match status" value="1"/>
</dbReference>
<dbReference type="Pfam" id="PF01590">
    <property type="entry name" value="GAF"/>
    <property type="match status" value="1"/>
</dbReference>
<dbReference type="Pfam" id="PF00072">
    <property type="entry name" value="Response_reg"/>
    <property type="match status" value="1"/>
</dbReference>
<dbReference type="PIRSF" id="PIRSF026389">
    <property type="entry name" value="Ethyln_sen_HK"/>
    <property type="match status" value="1"/>
</dbReference>
<dbReference type="SMART" id="SM00065">
    <property type="entry name" value="GAF"/>
    <property type="match status" value="1"/>
</dbReference>
<dbReference type="SMART" id="SM00448">
    <property type="entry name" value="REC"/>
    <property type="match status" value="1"/>
</dbReference>
<dbReference type="SUPFAM" id="SSF52172">
    <property type="entry name" value="CheY-like"/>
    <property type="match status" value="1"/>
</dbReference>
<dbReference type="SUPFAM" id="SSF55781">
    <property type="entry name" value="GAF domain-like"/>
    <property type="match status" value="1"/>
</dbReference>
<dbReference type="SUPFAM" id="SSF47384">
    <property type="entry name" value="Homodimeric domain of signal transducing histidine kinase"/>
    <property type="match status" value="1"/>
</dbReference>
<dbReference type="PROSITE" id="PS50110">
    <property type="entry name" value="RESPONSE_REGULATORY"/>
    <property type="match status" value="1"/>
</dbReference>
<evidence type="ECO:0000250" key="1">
    <source>
        <dbReference type="UniProtKB" id="P49333"/>
    </source>
</evidence>
<evidence type="ECO:0000255" key="2"/>
<evidence type="ECO:0000255" key="3">
    <source>
        <dbReference type="PROSITE-ProRule" id="PRU00107"/>
    </source>
</evidence>
<evidence type="ECO:0000255" key="4">
    <source>
        <dbReference type="PROSITE-ProRule" id="PRU00169"/>
    </source>
</evidence>
<evidence type="ECO:0000303" key="5">
    <source>
    </source>
</evidence>
<evidence type="ECO:0000305" key="6"/>
<evidence type="ECO:0000312" key="7">
    <source>
        <dbReference type="EMBL" id="AAR08914.1"/>
    </source>
</evidence>
<evidence type="ECO:0000312" key="8">
    <source>
        <dbReference type="EMBL" id="EAZ03426.1"/>
    </source>
</evidence>
<proteinExistence type="evidence at transcript level"/>
<sequence length="777" mass="83327">MAMVTARQFLASAAELGSGRRRCGGGGACDMREDGGVEALMQCQRVSNLLIAASFLSIPLELFYFATCADLSEVKCAVLHFCAFIVLCGATHLLAAFTHAHPHSAPLLRALTAAKVLAAVASSAAAVSLLTFIPKLLRIKVRESLLRDKASRLHRDLGLVRRREEATSRAVRELTGRIRASPPDAHAILRTTALQLADALGLHACAVWMPAAGRPHDLVLVHHLTSRPDDAADLLLEVGDACTVAADDPDVVDVMASKVAKVLEPDSALAMASSVGAAPAGAVAAIRIPILRVSIYDGGGTPEVTEASYAILVLLLPPHDAAGGWSSHDLEIVQVVADQAAVALSHAAVLEESRSMRDRFAEQHRALMQAKHRAAMATRAFSSIQSAMCHAMRRPVHSIVGLVSMLQHPEADTMRPEQRLAVDAIARTSNLLSALMDEVIVNRQHLSVQRKPFSLHALIKEAISVAGCLSHCGGAGFLHQLECALPEWVVGDERRVFHLLLDMVGTLLNRCNTESGACRLSFSIRICNVGEERYSLDWIPMRPTFSGCNVCVKFKVGIGRSRSCAIERSLPCELPRRSAATTSSQMGHIFSGYFNKIVQMMNGNMWSASDSEGVGESVTLILQFKLQQGHVEASPPYIPHLNGLRVLLADDDAMNRGVTKKILERLGCQVMSAPSGAHCLSLLASAEASFQLVVLDLDDRAVPSAAMDGFEVALRIRELRYSCWLLIVIAVAAGVVATDDGGAVQELCQRAGINGLVQKPVTLPALGAQLCRVLQDN</sequence>
<comment type="function">
    <text evidence="1">Ethylene receptor related to bacterial two-component regulators. Acts as a redundant negative regulator of ethylene signaling.</text>
</comment>
<comment type="catalytic activity">
    <reaction evidence="6">
        <text>ATP + protein L-histidine = ADP + protein N-phospho-L-histidine.</text>
        <dbReference type="EC" id="2.7.13.3"/>
    </reaction>
</comment>
<comment type="cofactor">
    <cofactor evidence="1">
        <name>Cu cation</name>
        <dbReference type="ChEBI" id="CHEBI:23378"/>
    </cofactor>
    <text evidence="1">Binds 1 copper ion per dimer.</text>
</comment>
<comment type="subcellular location">
    <subcellularLocation>
        <location evidence="1">Endoplasmic reticulum membrane</location>
        <topology evidence="2">Multi-pass membrane protein</topology>
    </subcellularLocation>
</comment>
<comment type="similarity">
    <text evidence="6">Belongs to the ethylene receptor family.</text>
</comment>
<reference key="1">
    <citation type="journal article" date="2004" name="J. Exp. Bot.">
        <title>Differential expression of three genes encoding an ethylene receptor in rice during development, and in response to indole-3-acetic acid and silver ions.</title>
        <authorList>
            <person name="Yau C.P."/>
            <person name="Wang L."/>
            <person name="Yu M."/>
            <person name="Zee S.Y."/>
            <person name="Yip W.K."/>
        </authorList>
    </citation>
    <scope>NUCLEOTIDE SEQUENCE [MRNA]</scope>
    <source>
        <strain>cv. IR36</strain>
    </source>
</reference>
<reference key="2">
    <citation type="journal article" date="2005" name="PLoS Biol.">
        <title>The genomes of Oryza sativa: a history of duplications.</title>
        <authorList>
            <person name="Yu J."/>
            <person name="Wang J."/>
            <person name="Lin W."/>
            <person name="Li S."/>
            <person name="Li H."/>
            <person name="Zhou J."/>
            <person name="Ni P."/>
            <person name="Dong W."/>
            <person name="Hu S."/>
            <person name="Zeng C."/>
            <person name="Zhang J."/>
            <person name="Zhang Y."/>
            <person name="Li R."/>
            <person name="Xu Z."/>
            <person name="Li S."/>
            <person name="Li X."/>
            <person name="Zheng H."/>
            <person name="Cong L."/>
            <person name="Lin L."/>
            <person name="Yin J."/>
            <person name="Geng J."/>
            <person name="Li G."/>
            <person name="Shi J."/>
            <person name="Liu J."/>
            <person name="Lv H."/>
            <person name="Li J."/>
            <person name="Wang J."/>
            <person name="Deng Y."/>
            <person name="Ran L."/>
            <person name="Shi X."/>
            <person name="Wang X."/>
            <person name="Wu Q."/>
            <person name="Li C."/>
            <person name="Ren X."/>
            <person name="Wang J."/>
            <person name="Wang X."/>
            <person name="Li D."/>
            <person name="Liu D."/>
            <person name="Zhang X."/>
            <person name="Ji Z."/>
            <person name="Zhao W."/>
            <person name="Sun Y."/>
            <person name="Zhang Z."/>
            <person name="Bao J."/>
            <person name="Han Y."/>
            <person name="Dong L."/>
            <person name="Ji J."/>
            <person name="Chen P."/>
            <person name="Wu S."/>
            <person name="Liu J."/>
            <person name="Xiao Y."/>
            <person name="Bu D."/>
            <person name="Tan J."/>
            <person name="Yang L."/>
            <person name="Ye C."/>
            <person name="Zhang J."/>
            <person name="Xu J."/>
            <person name="Zhou Y."/>
            <person name="Yu Y."/>
            <person name="Zhang B."/>
            <person name="Zhuang S."/>
            <person name="Wei H."/>
            <person name="Liu B."/>
            <person name="Lei M."/>
            <person name="Yu H."/>
            <person name="Li Y."/>
            <person name="Xu H."/>
            <person name="Wei S."/>
            <person name="He X."/>
            <person name="Fang L."/>
            <person name="Zhang Z."/>
            <person name="Zhang Y."/>
            <person name="Huang X."/>
            <person name="Su Z."/>
            <person name="Tong W."/>
            <person name="Li J."/>
            <person name="Tong Z."/>
            <person name="Li S."/>
            <person name="Ye J."/>
            <person name="Wang L."/>
            <person name="Fang L."/>
            <person name="Lei T."/>
            <person name="Chen C.-S."/>
            <person name="Chen H.-C."/>
            <person name="Xu Z."/>
            <person name="Li H."/>
            <person name="Huang H."/>
            <person name="Zhang F."/>
            <person name="Xu H."/>
            <person name="Li N."/>
            <person name="Zhao C."/>
            <person name="Li S."/>
            <person name="Dong L."/>
            <person name="Huang Y."/>
            <person name="Li L."/>
            <person name="Xi Y."/>
            <person name="Qi Q."/>
            <person name="Li W."/>
            <person name="Zhang B."/>
            <person name="Hu W."/>
            <person name="Zhang Y."/>
            <person name="Tian X."/>
            <person name="Jiao Y."/>
            <person name="Liang X."/>
            <person name="Jin J."/>
            <person name="Gao L."/>
            <person name="Zheng W."/>
            <person name="Hao B."/>
            <person name="Liu S.-M."/>
            <person name="Wang W."/>
            <person name="Yuan L."/>
            <person name="Cao M."/>
            <person name="McDermott J."/>
            <person name="Samudrala R."/>
            <person name="Wang J."/>
            <person name="Wong G.K.-S."/>
            <person name="Yang H."/>
        </authorList>
    </citation>
    <scope>NUCLEOTIDE SEQUENCE [LARGE SCALE GENOMIC DNA]</scope>
    <source>
        <strain>cv. 93-11</strain>
    </source>
</reference>